<name>RS7_PROMP</name>
<gene>
    <name evidence="1" type="primary">rpsG</name>
    <name evidence="1" type="synonym">rps7</name>
    <name type="ordered locus">PMM1510</name>
</gene>
<accession>Q7UZY5</accession>
<protein>
    <recommendedName>
        <fullName evidence="1">Small ribosomal subunit protein uS7</fullName>
    </recommendedName>
    <alternativeName>
        <fullName evidence="2">30S ribosomal protein S7</fullName>
    </alternativeName>
</protein>
<sequence length="156" mass="17357">MSRRNAAVKRPVLPDPQFNSRLASMMISRLMKHGKKSTAQKILSDAFSLISERTGGNAVELFETAVKNATPLVEVRARRVGGATYQVPMEVRQERGTAMALRWLVTFSRGRNGKSMSQKLAGELMDAANETGSAVKKREDTHKMAEANKAFAHYRY</sequence>
<organism>
    <name type="scientific">Prochlorococcus marinus subsp. pastoris (strain CCMP1986 / NIES-2087 / MED4)</name>
    <dbReference type="NCBI Taxonomy" id="59919"/>
    <lineage>
        <taxon>Bacteria</taxon>
        <taxon>Bacillati</taxon>
        <taxon>Cyanobacteriota</taxon>
        <taxon>Cyanophyceae</taxon>
        <taxon>Synechococcales</taxon>
        <taxon>Prochlorococcaceae</taxon>
        <taxon>Prochlorococcus</taxon>
    </lineage>
</organism>
<reference key="1">
    <citation type="journal article" date="2003" name="Nature">
        <title>Genome divergence in two Prochlorococcus ecotypes reflects oceanic niche differentiation.</title>
        <authorList>
            <person name="Rocap G."/>
            <person name="Larimer F.W."/>
            <person name="Lamerdin J.E."/>
            <person name="Malfatti S."/>
            <person name="Chain P."/>
            <person name="Ahlgren N.A."/>
            <person name="Arellano A."/>
            <person name="Coleman M."/>
            <person name="Hauser L."/>
            <person name="Hess W.R."/>
            <person name="Johnson Z.I."/>
            <person name="Land M.L."/>
            <person name="Lindell D."/>
            <person name="Post A.F."/>
            <person name="Regala W."/>
            <person name="Shah M."/>
            <person name="Shaw S.L."/>
            <person name="Steglich C."/>
            <person name="Sullivan M.B."/>
            <person name="Ting C.S."/>
            <person name="Tolonen A."/>
            <person name="Webb E.A."/>
            <person name="Zinser E.R."/>
            <person name="Chisholm S.W."/>
        </authorList>
    </citation>
    <scope>NUCLEOTIDE SEQUENCE [LARGE SCALE GENOMIC DNA]</scope>
    <source>
        <strain>CCMP1986 / NIES-2087 / MED4</strain>
    </source>
</reference>
<dbReference type="EMBL" id="BX548174">
    <property type="protein sequence ID" value="CAE19969.1"/>
    <property type="molecule type" value="Genomic_DNA"/>
</dbReference>
<dbReference type="RefSeq" id="WP_011133138.1">
    <property type="nucleotide sequence ID" value="NC_005072.1"/>
</dbReference>
<dbReference type="SMR" id="Q7UZY5"/>
<dbReference type="STRING" id="59919.PMM1510"/>
<dbReference type="GeneID" id="60202001"/>
<dbReference type="KEGG" id="pmm:PMM1510"/>
<dbReference type="eggNOG" id="COG0049">
    <property type="taxonomic scope" value="Bacteria"/>
</dbReference>
<dbReference type="HOGENOM" id="CLU_072226_1_1_3"/>
<dbReference type="OrthoDB" id="9807653at2"/>
<dbReference type="Proteomes" id="UP000001026">
    <property type="component" value="Chromosome"/>
</dbReference>
<dbReference type="GO" id="GO:0015935">
    <property type="term" value="C:small ribosomal subunit"/>
    <property type="evidence" value="ECO:0007669"/>
    <property type="project" value="InterPro"/>
</dbReference>
<dbReference type="GO" id="GO:0019843">
    <property type="term" value="F:rRNA binding"/>
    <property type="evidence" value="ECO:0007669"/>
    <property type="project" value="UniProtKB-UniRule"/>
</dbReference>
<dbReference type="GO" id="GO:0003735">
    <property type="term" value="F:structural constituent of ribosome"/>
    <property type="evidence" value="ECO:0007669"/>
    <property type="project" value="InterPro"/>
</dbReference>
<dbReference type="GO" id="GO:0000049">
    <property type="term" value="F:tRNA binding"/>
    <property type="evidence" value="ECO:0007669"/>
    <property type="project" value="UniProtKB-UniRule"/>
</dbReference>
<dbReference type="GO" id="GO:0006412">
    <property type="term" value="P:translation"/>
    <property type="evidence" value="ECO:0007669"/>
    <property type="project" value="UniProtKB-UniRule"/>
</dbReference>
<dbReference type="CDD" id="cd14869">
    <property type="entry name" value="uS7_Bacteria"/>
    <property type="match status" value="1"/>
</dbReference>
<dbReference type="FunFam" id="1.10.455.10:FF:000001">
    <property type="entry name" value="30S ribosomal protein S7"/>
    <property type="match status" value="1"/>
</dbReference>
<dbReference type="Gene3D" id="1.10.455.10">
    <property type="entry name" value="Ribosomal protein S7 domain"/>
    <property type="match status" value="1"/>
</dbReference>
<dbReference type="HAMAP" id="MF_00480_B">
    <property type="entry name" value="Ribosomal_uS7_B"/>
    <property type="match status" value="1"/>
</dbReference>
<dbReference type="InterPro" id="IPR000235">
    <property type="entry name" value="Ribosomal_uS7"/>
</dbReference>
<dbReference type="InterPro" id="IPR005717">
    <property type="entry name" value="Ribosomal_uS7_bac/org-type"/>
</dbReference>
<dbReference type="InterPro" id="IPR020606">
    <property type="entry name" value="Ribosomal_uS7_CS"/>
</dbReference>
<dbReference type="InterPro" id="IPR023798">
    <property type="entry name" value="Ribosomal_uS7_dom"/>
</dbReference>
<dbReference type="InterPro" id="IPR036823">
    <property type="entry name" value="Ribosomal_uS7_dom_sf"/>
</dbReference>
<dbReference type="NCBIfam" id="TIGR01029">
    <property type="entry name" value="rpsG_bact"/>
    <property type="match status" value="1"/>
</dbReference>
<dbReference type="PANTHER" id="PTHR11205">
    <property type="entry name" value="RIBOSOMAL PROTEIN S7"/>
    <property type="match status" value="1"/>
</dbReference>
<dbReference type="Pfam" id="PF00177">
    <property type="entry name" value="Ribosomal_S7"/>
    <property type="match status" value="1"/>
</dbReference>
<dbReference type="PIRSF" id="PIRSF002122">
    <property type="entry name" value="RPS7p_RPS7a_RPS5e_RPS7o"/>
    <property type="match status" value="1"/>
</dbReference>
<dbReference type="SUPFAM" id="SSF47973">
    <property type="entry name" value="Ribosomal protein S7"/>
    <property type="match status" value="1"/>
</dbReference>
<dbReference type="PROSITE" id="PS00052">
    <property type="entry name" value="RIBOSOMAL_S7"/>
    <property type="match status" value="1"/>
</dbReference>
<comment type="function">
    <text evidence="1">One of the primary rRNA binding proteins, it binds directly to 16S rRNA where it nucleates assembly of the head domain of the 30S subunit. Is located at the subunit interface close to the decoding center, probably blocks exit of the E-site tRNA.</text>
</comment>
<comment type="subunit">
    <text evidence="1">Part of the 30S ribosomal subunit. Contacts proteins S9 and S11.</text>
</comment>
<comment type="similarity">
    <text evidence="1">Belongs to the universal ribosomal protein uS7 family.</text>
</comment>
<proteinExistence type="inferred from homology"/>
<feature type="chain" id="PRO_0000124321" description="Small ribosomal subunit protein uS7">
    <location>
        <begin position="1"/>
        <end position="156"/>
    </location>
</feature>
<evidence type="ECO:0000255" key="1">
    <source>
        <dbReference type="HAMAP-Rule" id="MF_00480"/>
    </source>
</evidence>
<evidence type="ECO:0000305" key="2"/>
<keyword id="KW-0687">Ribonucleoprotein</keyword>
<keyword id="KW-0689">Ribosomal protein</keyword>
<keyword id="KW-0694">RNA-binding</keyword>
<keyword id="KW-0699">rRNA-binding</keyword>
<keyword id="KW-0820">tRNA-binding</keyword>